<name>RL30_SALTY</name>
<sequence length="59" mass="6514">MAKTIKITQTRSAIGRLPKHKATLLGLGLRRIGHTVEREDTPAVRGMVNAVSFMVKVEE</sequence>
<organism>
    <name type="scientific">Salmonella typhimurium (strain LT2 / SGSC1412 / ATCC 700720)</name>
    <dbReference type="NCBI Taxonomy" id="99287"/>
    <lineage>
        <taxon>Bacteria</taxon>
        <taxon>Pseudomonadati</taxon>
        <taxon>Pseudomonadota</taxon>
        <taxon>Gammaproteobacteria</taxon>
        <taxon>Enterobacterales</taxon>
        <taxon>Enterobacteriaceae</taxon>
        <taxon>Salmonella</taxon>
    </lineage>
</organism>
<keyword id="KW-1185">Reference proteome</keyword>
<keyword id="KW-0687">Ribonucleoprotein</keyword>
<keyword id="KW-0689">Ribosomal protein</keyword>
<evidence type="ECO:0000250" key="1"/>
<evidence type="ECO:0000255" key="2">
    <source>
        <dbReference type="HAMAP-Rule" id="MF_01371"/>
    </source>
</evidence>
<evidence type="ECO:0000305" key="3"/>
<proteinExistence type="inferred from homology"/>
<feature type="initiator methionine" description="Removed" evidence="1">
    <location>
        <position position="1"/>
    </location>
</feature>
<feature type="chain" id="PRO_0000104603" description="Large ribosomal subunit protein uL30">
    <location>
        <begin position="2"/>
        <end position="59"/>
    </location>
</feature>
<reference key="1">
    <citation type="journal article" date="2001" name="Nature">
        <title>Complete genome sequence of Salmonella enterica serovar Typhimurium LT2.</title>
        <authorList>
            <person name="McClelland M."/>
            <person name="Sanderson K.E."/>
            <person name="Spieth J."/>
            <person name="Clifton S.W."/>
            <person name="Latreille P."/>
            <person name="Courtney L."/>
            <person name="Porwollik S."/>
            <person name="Ali J."/>
            <person name="Dante M."/>
            <person name="Du F."/>
            <person name="Hou S."/>
            <person name="Layman D."/>
            <person name="Leonard S."/>
            <person name="Nguyen C."/>
            <person name="Scott K."/>
            <person name="Holmes A."/>
            <person name="Grewal N."/>
            <person name="Mulvaney E."/>
            <person name="Ryan E."/>
            <person name="Sun H."/>
            <person name="Florea L."/>
            <person name="Miller W."/>
            <person name="Stoneking T."/>
            <person name="Nhan M."/>
            <person name="Waterston R."/>
            <person name="Wilson R.K."/>
        </authorList>
    </citation>
    <scope>NUCLEOTIDE SEQUENCE [LARGE SCALE GENOMIC DNA]</scope>
    <source>
        <strain>LT2 / SGSC1412 / ATCC 700720</strain>
    </source>
</reference>
<reference key="2">
    <citation type="journal article" date="1998" name="Proc. Natl. Acad. Sci. U.S.A.">
        <title>Virulence of antibiotic-resistant Salmonella typhimurium.</title>
        <authorList>
            <person name="Bjoerkman J."/>
            <person name="Hughes D."/>
            <person name="Andersson D.I."/>
        </authorList>
    </citation>
    <scope>NUCLEOTIDE SEQUENCE [GENOMIC DNA] OF 1-14</scope>
    <source>
        <strain>LT2</strain>
    </source>
</reference>
<protein>
    <recommendedName>
        <fullName evidence="2">Large ribosomal subunit protein uL30</fullName>
    </recommendedName>
    <alternativeName>
        <fullName evidence="3">50S ribosomal protein L30</fullName>
    </alternativeName>
</protein>
<comment type="subunit">
    <text evidence="2">Part of the 50S ribosomal subunit.</text>
</comment>
<comment type="similarity">
    <text evidence="2">Belongs to the universal ribosomal protein uL30 family.</text>
</comment>
<dbReference type="EMBL" id="AE006468">
    <property type="protein sequence ID" value="AAL22285.1"/>
    <property type="molecule type" value="Genomic_DNA"/>
</dbReference>
<dbReference type="EMBL" id="AJ223237">
    <property type="protein sequence ID" value="CAA11206.1"/>
    <property type="molecule type" value="Genomic_DNA"/>
</dbReference>
<dbReference type="RefSeq" id="NP_462326.1">
    <property type="nucleotide sequence ID" value="NC_003197.2"/>
</dbReference>
<dbReference type="RefSeq" id="WP_001140434.1">
    <property type="nucleotide sequence ID" value="NC_003197.2"/>
</dbReference>
<dbReference type="SMR" id="P0A2A7"/>
<dbReference type="STRING" id="99287.STM3422"/>
<dbReference type="PaxDb" id="99287-STM3422"/>
<dbReference type="GeneID" id="1254945"/>
<dbReference type="GeneID" id="97393185"/>
<dbReference type="KEGG" id="stm:STM3422"/>
<dbReference type="PATRIC" id="fig|99287.12.peg.3619"/>
<dbReference type="HOGENOM" id="CLU_131047_1_4_6"/>
<dbReference type="OMA" id="KMHKTRE"/>
<dbReference type="PhylomeDB" id="P0A2A7"/>
<dbReference type="BioCyc" id="SENT99287:STM3422-MONOMER"/>
<dbReference type="PRO" id="PR:P0A2A7"/>
<dbReference type="Proteomes" id="UP000001014">
    <property type="component" value="Chromosome"/>
</dbReference>
<dbReference type="GO" id="GO:0022625">
    <property type="term" value="C:cytosolic large ribosomal subunit"/>
    <property type="evidence" value="ECO:0000318"/>
    <property type="project" value="GO_Central"/>
</dbReference>
<dbReference type="GO" id="GO:0003735">
    <property type="term" value="F:structural constituent of ribosome"/>
    <property type="evidence" value="ECO:0007669"/>
    <property type="project" value="InterPro"/>
</dbReference>
<dbReference type="GO" id="GO:0006412">
    <property type="term" value="P:translation"/>
    <property type="evidence" value="ECO:0007669"/>
    <property type="project" value="UniProtKB-UniRule"/>
</dbReference>
<dbReference type="CDD" id="cd01658">
    <property type="entry name" value="Ribosomal_L30"/>
    <property type="match status" value="1"/>
</dbReference>
<dbReference type="FunFam" id="3.30.1390.20:FF:000001">
    <property type="entry name" value="50S ribosomal protein L30"/>
    <property type="match status" value="1"/>
</dbReference>
<dbReference type="Gene3D" id="3.30.1390.20">
    <property type="entry name" value="Ribosomal protein L30, ferredoxin-like fold domain"/>
    <property type="match status" value="1"/>
</dbReference>
<dbReference type="HAMAP" id="MF_01371_B">
    <property type="entry name" value="Ribosomal_uL30_B"/>
    <property type="match status" value="1"/>
</dbReference>
<dbReference type="InterPro" id="IPR036919">
    <property type="entry name" value="Ribo_uL30_ferredoxin-like_sf"/>
</dbReference>
<dbReference type="InterPro" id="IPR005996">
    <property type="entry name" value="Ribosomal_uL30_bac-type"/>
</dbReference>
<dbReference type="InterPro" id="IPR018038">
    <property type="entry name" value="Ribosomal_uL30_CS"/>
</dbReference>
<dbReference type="InterPro" id="IPR016082">
    <property type="entry name" value="Ribosomal_uL30_ferredoxin-like"/>
</dbReference>
<dbReference type="NCBIfam" id="TIGR01308">
    <property type="entry name" value="rpmD_bact"/>
    <property type="match status" value="1"/>
</dbReference>
<dbReference type="PANTHER" id="PTHR15892:SF2">
    <property type="entry name" value="LARGE RIBOSOMAL SUBUNIT PROTEIN UL30M"/>
    <property type="match status" value="1"/>
</dbReference>
<dbReference type="PANTHER" id="PTHR15892">
    <property type="entry name" value="MITOCHONDRIAL RIBOSOMAL PROTEIN L30"/>
    <property type="match status" value="1"/>
</dbReference>
<dbReference type="Pfam" id="PF00327">
    <property type="entry name" value="Ribosomal_L30"/>
    <property type="match status" value="1"/>
</dbReference>
<dbReference type="PIRSF" id="PIRSF002211">
    <property type="entry name" value="Ribosomal_L30_bac-type"/>
    <property type="match status" value="1"/>
</dbReference>
<dbReference type="SUPFAM" id="SSF55129">
    <property type="entry name" value="Ribosomal protein L30p/L7e"/>
    <property type="match status" value="1"/>
</dbReference>
<dbReference type="PROSITE" id="PS00634">
    <property type="entry name" value="RIBOSOMAL_L30"/>
    <property type="match status" value="1"/>
</dbReference>
<gene>
    <name evidence="2" type="primary">rpmD</name>
    <name type="ordered locus">STM3422</name>
</gene>
<accession>P0A2A7</accession>
<accession>O54300</accession>